<feature type="chain" id="PRO_1000188911" description="Urease subunit beta">
    <location>
        <begin position="1"/>
        <end position="102"/>
    </location>
</feature>
<organism>
    <name type="scientific">Alteromonas mediterranea (strain DSM 17117 / CIP 110805 / LMG 28347 / Deep ecotype)</name>
    <dbReference type="NCBI Taxonomy" id="1774373"/>
    <lineage>
        <taxon>Bacteria</taxon>
        <taxon>Pseudomonadati</taxon>
        <taxon>Pseudomonadota</taxon>
        <taxon>Gammaproteobacteria</taxon>
        <taxon>Alteromonadales</taxon>
        <taxon>Alteromonadaceae</taxon>
        <taxon>Alteromonas/Salinimonas group</taxon>
        <taxon>Alteromonas</taxon>
    </lineage>
</organism>
<protein>
    <recommendedName>
        <fullName evidence="1">Urease subunit beta</fullName>
        <ecNumber evidence="1">3.5.1.5</ecNumber>
    </recommendedName>
    <alternativeName>
        <fullName evidence="1">Urea amidohydrolase subunit beta</fullName>
    </alternativeName>
</protein>
<dbReference type="EC" id="3.5.1.5" evidence="1"/>
<dbReference type="EMBL" id="CP001103">
    <property type="protein sequence ID" value="AEA98991.1"/>
    <property type="molecule type" value="Genomic_DNA"/>
</dbReference>
<dbReference type="RefSeq" id="WP_012519283.1">
    <property type="nucleotide sequence ID" value="NC_011138.3"/>
</dbReference>
<dbReference type="SMR" id="B4RSX8"/>
<dbReference type="KEGG" id="amc:MADE_1014285"/>
<dbReference type="HOGENOM" id="CLU_129707_1_1_6"/>
<dbReference type="UniPathway" id="UPA00258">
    <property type="reaction ID" value="UER00370"/>
</dbReference>
<dbReference type="Proteomes" id="UP000001870">
    <property type="component" value="Chromosome"/>
</dbReference>
<dbReference type="GO" id="GO:0035550">
    <property type="term" value="C:urease complex"/>
    <property type="evidence" value="ECO:0007669"/>
    <property type="project" value="InterPro"/>
</dbReference>
<dbReference type="GO" id="GO:0009039">
    <property type="term" value="F:urease activity"/>
    <property type="evidence" value="ECO:0007669"/>
    <property type="project" value="UniProtKB-UniRule"/>
</dbReference>
<dbReference type="GO" id="GO:0043419">
    <property type="term" value="P:urea catabolic process"/>
    <property type="evidence" value="ECO:0007669"/>
    <property type="project" value="UniProtKB-UniRule"/>
</dbReference>
<dbReference type="CDD" id="cd00407">
    <property type="entry name" value="Urease_beta"/>
    <property type="match status" value="1"/>
</dbReference>
<dbReference type="FunFam" id="2.10.150.10:FF:000001">
    <property type="entry name" value="Urease subunit beta"/>
    <property type="match status" value="1"/>
</dbReference>
<dbReference type="Gene3D" id="2.10.150.10">
    <property type="entry name" value="Urease, beta subunit"/>
    <property type="match status" value="1"/>
</dbReference>
<dbReference type="HAMAP" id="MF_01954">
    <property type="entry name" value="Urease_beta"/>
    <property type="match status" value="1"/>
</dbReference>
<dbReference type="InterPro" id="IPR002019">
    <property type="entry name" value="Urease_beta-like"/>
</dbReference>
<dbReference type="InterPro" id="IPR036461">
    <property type="entry name" value="Urease_betasu_sf"/>
</dbReference>
<dbReference type="InterPro" id="IPR050069">
    <property type="entry name" value="Urease_subunit"/>
</dbReference>
<dbReference type="NCBIfam" id="NF009682">
    <property type="entry name" value="PRK13203.1"/>
    <property type="match status" value="1"/>
</dbReference>
<dbReference type="NCBIfam" id="TIGR00192">
    <property type="entry name" value="urease_beta"/>
    <property type="match status" value="1"/>
</dbReference>
<dbReference type="PANTHER" id="PTHR33569">
    <property type="entry name" value="UREASE"/>
    <property type="match status" value="1"/>
</dbReference>
<dbReference type="PANTHER" id="PTHR33569:SF1">
    <property type="entry name" value="UREASE"/>
    <property type="match status" value="1"/>
</dbReference>
<dbReference type="Pfam" id="PF00699">
    <property type="entry name" value="Urease_beta"/>
    <property type="match status" value="1"/>
</dbReference>
<dbReference type="SUPFAM" id="SSF51278">
    <property type="entry name" value="Urease, beta-subunit"/>
    <property type="match status" value="1"/>
</dbReference>
<evidence type="ECO:0000255" key="1">
    <source>
        <dbReference type="HAMAP-Rule" id="MF_01954"/>
    </source>
</evidence>
<sequence>MIPGEIKTDSGDRELNVGRPRIKIKVANAGDRPIQVGSHYHFYEVNNALKFDREATKGYRLDITSSTAIRFEPGQEREVTLIPYQGSRTVIGFQGKVQGVLS</sequence>
<keyword id="KW-0963">Cytoplasm</keyword>
<keyword id="KW-0378">Hydrolase</keyword>
<comment type="catalytic activity">
    <reaction evidence="1">
        <text>urea + 2 H2O + H(+) = hydrogencarbonate + 2 NH4(+)</text>
        <dbReference type="Rhea" id="RHEA:20557"/>
        <dbReference type="ChEBI" id="CHEBI:15377"/>
        <dbReference type="ChEBI" id="CHEBI:15378"/>
        <dbReference type="ChEBI" id="CHEBI:16199"/>
        <dbReference type="ChEBI" id="CHEBI:17544"/>
        <dbReference type="ChEBI" id="CHEBI:28938"/>
        <dbReference type="EC" id="3.5.1.5"/>
    </reaction>
</comment>
<comment type="pathway">
    <text evidence="1">Nitrogen metabolism; urea degradation; CO(2) and NH(3) from urea (urease route): step 1/1.</text>
</comment>
<comment type="subunit">
    <text evidence="1">Heterotrimer of UreA (gamma), UreB (beta) and UreC (alpha) subunits. Three heterotrimers associate to form the active enzyme.</text>
</comment>
<comment type="subcellular location">
    <subcellularLocation>
        <location evidence="1">Cytoplasm</location>
    </subcellularLocation>
</comment>
<comment type="similarity">
    <text evidence="1">Belongs to the urease beta subunit family.</text>
</comment>
<name>URE2_ALTMD</name>
<proteinExistence type="inferred from homology"/>
<gene>
    <name evidence="1" type="primary">ureB</name>
    <name type="ordered locus">MADE_1014285</name>
</gene>
<accession>B4RSX8</accession>
<accession>F2GBE5</accession>
<reference key="1">
    <citation type="journal article" date="2008" name="ISME J.">
        <title>Comparative genomics of two ecotypes of the marine planktonic copiotroph Alteromonas macleodii suggests alternative lifestyles associated with different kinds of particulate organic matter.</title>
        <authorList>
            <person name="Ivars-Martinez E."/>
            <person name="Martin-Cuadrado A.-B."/>
            <person name="D'Auria G."/>
            <person name="Mira A."/>
            <person name="Ferriera S."/>
            <person name="Johnson J."/>
            <person name="Friedman R."/>
            <person name="Rodriguez-Valera F."/>
        </authorList>
    </citation>
    <scope>NUCLEOTIDE SEQUENCE [LARGE SCALE GENOMIC DNA]</scope>
    <source>
        <strain>DSM 17117 / CIP 110805 / LMG 28347 / Deep ecotype</strain>
    </source>
</reference>